<comment type="function">
    <text evidence="1">Produces ATP from ADP in the presence of a proton gradient across the membrane. The catalytic sites are hosted primarily by the beta subunits.</text>
</comment>
<comment type="catalytic activity">
    <reaction evidence="1">
        <text>ATP + H2O + 4 H(+)(in) = ADP + phosphate + 5 H(+)(out)</text>
        <dbReference type="Rhea" id="RHEA:57720"/>
        <dbReference type="ChEBI" id="CHEBI:15377"/>
        <dbReference type="ChEBI" id="CHEBI:15378"/>
        <dbReference type="ChEBI" id="CHEBI:30616"/>
        <dbReference type="ChEBI" id="CHEBI:43474"/>
        <dbReference type="ChEBI" id="CHEBI:456216"/>
        <dbReference type="EC" id="7.1.2.2"/>
    </reaction>
</comment>
<comment type="subunit">
    <text evidence="1">F-type ATPases have 2 components, CF(1) - the catalytic core - and CF(0) - the membrane proton channel. CF(1) has five subunits: alpha(3), beta(3), gamma(1), delta(1), epsilon(1). CF(0) has three main subunits: a(1), b(2) and c(9-12). The alpha and beta chains form an alternating ring which encloses part of the gamma chain. CF(1) is attached to CF(0) by a central stalk formed by the gamma and epsilon chains, while a peripheral stalk is formed by the delta and b chains.</text>
</comment>
<comment type="subcellular location">
    <subcellularLocation>
        <location evidence="1">Cell inner membrane</location>
        <topology evidence="1">Peripheral membrane protein</topology>
    </subcellularLocation>
</comment>
<comment type="similarity">
    <text evidence="1">Belongs to the ATPase alpha/beta chains family.</text>
</comment>
<accession>Q1MAZ2</accession>
<protein>
    <recommendedName>
        <fullName evidence="1">ATP synthase subunit beta</fullName>
        <ecNumber evidence="1">7.1.2.2</ecNumber>
    </recommendedName>
    <alternativeName>
        <fullName evidence="1">ATP synthase F1 sector subunit beta</fullName>
    </alternativeName>
    <alternativeName>
        <fullName evidence="1">F-ATPase subunit beta</fullName>
    </alternativeName>
</protein>
<feature type="chain" id="PRO_0000254351" description="ATP synthase subunit beta">
    <location>
        <begin position="1"/>
        <end position="478"/>
    </location>
</feature>
<feature type="binding site" evidence="1">
    <location>
        <begin position="158"/>
        <end position="165"/>
    </location>
    <ligand>
        <name>ATP</name>
        <dbReference type="ChEBI" id="CHEBI:30616"/>
    </ligand>
</feature>
<proteinExistence type="inferred from homology"/>
<gene>
    <name evidence="1" type="primary">atpD</name>
    <name type="ordered locus">RL4407</name>
</gene>
<evidence type="ECO:0000255" key="1">
    <source>
        <dbReference type="HAMAP-Rule" id="MF_01347"/>
    </source>
</evidence>
<keyword id="KW-0066">ATP synthesis</keyword>
<keyword id="KW-0067">ATP-binding</keyword>
<keyword id="KW-0997">Cell inner membrane</keyword>
<keyword id="KW-1003">Cell membrane</keyword>
<keyword id="KW-0139">CF(1)</keyword>
<keyword id="KW-0375">Hydrogen ion transport</keyword>
<keyword id="KW-0406">Ion transport</keyword>
<keyword id="KW-0472">Membrane</keyword>
<keyword id="KW-0547">Nucleotide-binding</keyword>
<keyword id="KW-1278">Translocase</keyword>
<keyword id="KW-0813">Transport</keyword>
<name>ATPB_RHIJ3</name>
<dbReference type="EC" id="7.1.2.2" evidence="1"/>
<dbReference type="EMBL" id="AM236080">
    <property type="protein sequence ID" value="CAK09893.1"/>
    <property type="molecule type" value="Genomic_DNA"/>
</dbReference>
<dbReference type="RefSeq" id="WP_011653785.1">
    <property type="nucleotide sequence ID" value="NC_008380.1"/>
</dbReference>
<dbReference type="SMR" id="Q1MAZ2"/>
<dbReference type="EnsemblBacteria" id="CAK09893">
    <property type="protein sequence ID" value="CAK09893"/>
    <property type="gene ID" value="RL4407"/>
</dbReference>
<dbReference type="KEGG" id="rle:RL4407"/>
<dbReference type="eggNOG" id="COG0055">
    <property type="taxonomic scope" value="Bacteria"/>
</dbReference>
<dbReference type="HOGENOM" id="CLU_022398_0_2_5"/>
<dbReference type="Proteomes" id="UP000006575">
    <property type="component" value="Chromosome"/>
</dbReference>
<dbReference type="GO" id="GO:0005886">
    <property type="term" value="C:plasma membrane"/>
    <property type="evidence" value="ECO:0007669"/>
    <property type="project" value="UniProtKB-SubCell"/>
</dbReference>
<dbReference type="GO" id="GO:0045259">
    <property type="term" value="C:proton-transporting ATP synthase complex"/>
    <property type="evidence" value="ECO:0007669"/>
    <property type="project" value="UniProtKB-KW"/>
</dbReference>
<dbReference type="GO" id="GO:0005524">
    <property type="term" value="F:ATP binding"/>
    <property type="evidence" value="ECO:0007669"/>
    <property type="project" value="UniProtKB-UniRule"/>
</dbReference>
<dbReference type="GO" id="GO:0016887">
    <property type="term" value="F:ATP hydrolysis activity"/>
    <property type="evidence" value="ECO:0007669"/>
    <property type="project" value="InterPro"/>
</dbReference>
<dbReference type="GO" id="GO:0046933">
    <property type="term" value="F:proton-transporting ATP synthase activity, rotational mechanism"/>
    <property type="evidence" value="ECO:0007669"/>
    <property type="project" value="UniProtKB-UniRule"/>
</dbReference>
<dbReference type="CDD" id="cd18110">
    <property type="entry name" value="ATP-synt_F1_beta_C"/>
    <property type="match status" value="1"/>
</dbReference>
<dbReference type="CDD" id="cd18115">
    <property type="entry name" value="ATP-synt_F1_beta_N"/>
    <property type="match status" value="1"/>
</dbReference>
<dbReference type="CDD" id="cd01133">
    <property type="entry name" value="F1-ATPase_beta_CD"/>
    <property type="match status" value="1"/>
</dbReference>
<dbReference type="FunFam" id="1.10.1140.10:FF:000001">
    <property type="entry name" value="ATP synthase subunit beta"/>
    <property type="match status" value="1"/>
</dbReference>
<dbReference type="FunFam" id="2.40.10.170:FF:000005">
    <property type="entry name" value="ATP synthase subunit beta"/>
    <property type="match status" value="1"/>
</dbReference>
<dbReference type="FunFam" id="3.40.50.300:FF:000026">
    <property type="entry name" value="ATP synthase subunit beta"/>
    <property type="match status" value="1"/>
</dbReference>
<dbReference type="Gene3D" id="2.40.10.170">
    <property type="match status" value="1"/>
</dbReference>
<dbReference type="Gene3D" id="1.10.1140.10">
    <property type="entry name" value="Bovine Mitochondrial F1-atpase, Atp Synthase Beta Chain, Chain D, domain 3"/>
    <property type="match status" value="1"/>
</dbReference>
<dbReference type="Gene3D" id="3.40.50.300">
    <property type="entry name" value="P-loop containing nucleotide triphosphate hydrolases"/>
    <property type="match status" value="1"/>
</dbReference>
<dbReference type="HAMAP" id="MF_01347">
    <property type="entry name" value="ATP_synth_beta_bact"/>
    <property type="match status" value="1"/>
</dbReference>
<dbReference type="InterPro" id="IPR003593">
    <property type="entry name" value="AAA+_ATPase"/>
</dbReference>
<dbReference type="InterPro" id="IPR055190">
    <property type="entry name" value="ATP-synt_VA_C"/>
</dbReference>
<dbReference type="InterPro" id="IPR005722">
    <property type="entry name" value="ATP_synth_F1_bsu"/>
</dbReference>
<dbReference type="InterPro" id="IPR020003">
    <property type="entry name" value="ATPase_a/bsu_AS"/>
</dbReference>
<dbReference type="InterPro" id="IPR050053">
    <property type="entry name" value="ATPase_alpha/beta_chains"/>
</dbReference>
<dbReference type="InterPro" id="IPR004100">
    <property type="entry name" value="ATPase_F1/V1/A1_a/bsu_N"/>
</dbReference>
<dbReference type="InterPro" id="IPR036121">
    <property type="entry name" value="ATPase_F1/V1/A1_a/bsu_N_sf"/>
</dbReference>
<dbReference type="InterPro" id="IPR000194">
    <property type="entry name" value="ATPase_F1/V1/A1_a/bsu_nucl-bd"/>
</dbReference>
<dbReference type="InterPro" id="IPR024034">
    <property type="entry name" value="ATPase_F1/V1_b/a_C"/>
</dbReference>
<dbReference type="InterPro" id="IPR027417">
    <property type="entry name" value="P-loop_NTPase"/>
</dbReference>
<dbReference type="NCBIfam" id="TIGR01039">
    <property type="entry name" value="atpD"/>
    <property type="match status" value="1"/>
</dbReference>
<dbReference type="PANTHER" id="PTHR15184">
    <property type="entry name" value="ATP SYNTHASE"/>
    <property type="match status" value="1"/>
</dbReference>
<dbReference type="PANTHER" id="PTHR15184:SF71">
    <property type="entry name" value="ATP SYNTHASE SUBUNIT BETA, MITOCHONDRIAL"/>
    <property type="match status" value="1"/>
</dbReference>
<dbReference type="Pfam" id="PF00006">
    <property type="entry name" value="ATP-synt_ab"/>
    <property type="match status" value="1"/>
</dbReference>
<dbReference type="Pfam" id="PF02874">
    <property type="entry name" value="ATP-synt_ab_N"/>
    <property type="match status" value="1"/>
</dbReference>
<dbReference type="Pfam" id="PF22919">
    <property type="entry name" value="ATP-synt_VA_C"/>
    <property type="match status" value="1"/>
</dbReference>
<dbReference type="PIRSF" id="PIRSF039072">
    <property type="entry name" value="ATPase_subunit_beta"/>
    <property type="match status" value="1"/>
</dbReference>
<dbReference type="SMART" id="SM00382">
    <property type="entry name" value="AAA"/>
    <property type="match status" value="1"/>
</dbReference>
<dbReference type="SUPFAM" id="SSF47917">
    <property type="entry name" value="C-terminal domain of alpha and beta subunits of F1 ATP synthase"/>
    <property type="match status" value="1"/>
</dbReference>
<dbReference type="SUPFAM" id="SSF50615">
    <property type="entry name" value="N-terminal domain of alpha and beta subunits of F1 ATP synthase"/>
    <property type="match status" value="1"/>
</dbReference>
<dbReference type="SUPFAM" id="SSF52540">
    <property type="entry name" value="P-loop containing nucleoside triphosphate hydrolases"/>
    <property type="match status" value="1"/>
</dbReference>
<dbReference type="PROSITE" id="PS00152">
    <property type="entry name" value="ATPASE_ALPHA_BETA"/>
    <property type="match status" value="1"/>
</dbReference>
<reference key="1">
    <citation type="journal article" date="2006" name="Genome Biol.">
        <title>The genome of Rhizobium leguminosarum has recognizable core and accessory components.</title>
        <authorList>
            <person name="Young J.P.W."/>
            <person name="Crossman L.C."/>
            <person name="Johnston A.W.B."/>
            <person name="Thomson N.R."/>
            <person name="Ghazoui Z.F."/>
            <person name="Hull K.H."/>
            <person name="Wexler M."/>
            <person name="Curson A.R.J."/>
            <person name="Todd J.D."/>
            <person name="Poole P.S."/>
            <person name="Mauchline T.H."/>
            <person name="East A.K."/>
            <person name="Quail M.A."/>
            <person name="Churcher C."/>
            <person name="Arrowsmith C."/>
            <person name="Cherevach I."/>
            <person name="Chillingworth T."/>
            <person name="Clarke K."/>
            <person name="Cronin A."/>
            <person name="Davis P."/>
            <person name="Fraser A."/>
            <person name="Hance Z."/>
            <person name="Hauser H."/>
            <person name="Jagels K."/>
            <person name="Moule S."/>
            <person name="Mungall K."/>
            <person name="Norbertczak H."/>
            <person name="Rabbinowitsch E."/>
            <person name="Sanders M."/>
            <person name="Simmonds M."/>
            <person name="Whitehead S."/>
            <person name="Parkhill J."/>
        </authorList>
    </citation>
    <scope>NUCLEOTIDE SEQUENCE [LARGE SCALE GENOMIC DNA]</scope>
    <source>
        <strain>DSM 114642 / LMG 32736 / 3841</strain>
    </source>
</reference>
<sequence>MAEAATPKIGSVGRVTQVIGAVVDVAFEGELPKILNALETSNNGNRLVLEVAQHLGENVVRTIAMDSSEGLVRGQEVADTGAPIMVPVGNETLGRIMNVIGEPVDEAGPLVTAHKRAIHQDAPSYVEQSTESQILVTGIKVVDLLAPYARGGKIGLFGGAGVGKTVLIMELINNVAKAHGGYSVFAGVGERTREGNDLYHEMIESNVNKHGGGEGSKAALVYGQMNEPPGARARVALTGLTVAEHFRDQGQDVLFFVDNIFRFTQAGSEVSALLGRIPSAVGYQPTLATDMGQMQERITTTTTGSITSVQAIYVPADDLTDPAPATSFAHLDATTVLSRSIAEKGIYPAVDPLDSTSRMLDPMVVGEEHYEVARKVQSTLQRYKALQDIIAILGMDELSEDDKIAVARARKIERFLSQPFFVAEVFTGSPGKLVALEDTIKGFKGLVNGEYDHLPEAAFYMVGSMEEAVEKAKKLAAA</sequence>
<organism>
    <name type="scientific">Rhizobium johnstonii (strain DSM 114642 / LMG 32736 / 3841)</name>
    <name type="common">Rhizobium leguminosarum bv. viciae</name>
    <dbReference type="NCBI Taxonomy" id="216596"/>
    <lineage>
        <taxon>Bacteria</taxon>
        <taxon>Pseudomonadati</taxon>
        <taxon>Pseudomonadota</taxon>
        <taxon>Alphaproteobacteria</taxon>
        <taxon>Hyphomicrobiales</taxon>
        <taxon>Rhizobiaceae</taxon>
        <taxon>Rhizobium/Agrobacterium group</taxon>
        <taxon>Rhizobium</taxon>
        <taxon>Rhizobium johnstonii</taxon>
    </lineage>
</organism>